<sequence>MSRISKAEMSRLLSVYFIMGSNNCTKDPLQILKDALEGGITIFQFREKGEGALTGEERICFAKELQAICKEYGVPFIVNDDVELALELDADGVHVGQEDEGITSVREKMGDKIIGVSTHTIEEARWAIENGADYLGVGPIFPTSTKKDTKAVQGTKGLAHFREQGITIPIVGIGGISIENTASVIEAGADGVSVISAISLAESAYESTKQLVEEVSKKGTSHKY</sequence>
<evidence type="ECO:0000255" key="1">
    <source>
        <dbReference type="HAMAP-Rule" id="MF_00097"/>
    </source>
</evidence>
<reference key="1">
    <citation type="journal article" date="2004" name="Nucleic Acids Res.">
        <title>The genome sequence of Bacillus cereus ATCC 10987 reveals metabolic adaptations and a large plasmid related to Bacillus anthracis pXO1.</title>
        <authorList>
            <person name="Rasko D.A."/>
            <person name="Ravel J."/>
            <person name="Oekstad O.A."/>
            <person name="Helgason E."/>
            <person name="Cer R.Z."/>
            <person name="Jiang L."/>
            <person name="Shores K.A."/>
            <person name="Fouts D.E."/>
            <person name="Tourasse N.J."/>
            <person name="Angiuoli S.V."/>
            <person name="Kolonay J.F."/>
            <person name="Nelson W.C."/>
            <person name="Kolstoe A.-B."/>
            <person name="Fraser C.M."/>
            <person name="Read T.D."/>
        </authorList>
    </citation>
    <scope>NUCLEOTIDE SEQUENCE [LARGE SCALE GENOMIC DNA]</scope>
    <source>
        <strain>ATCC 10987 / NRS 248</strain>
    </source>
</reference>
<gene>
    <name evidence="1" type="primary">thiE</name>
    <name type="ordered locus">BCE_0487</name>
</gene>
<proteinExistence type="inferred from homology"/>
<name>THIE_BACC1</name>
<dbReference type="EC" id="2.5.1.3" evidence="1"/>
<dbReference type="EMBL" id="AE017194">
    <property type="protein sequence ID" value="AAS39422.1"/>
    <property type="molecule type" value="Genomic_DNA"/>
</dbReference>
<dbReference type="SMR" id="P61410"/>
<dbReference type="KEGG" id="bca:BCE_0487"/>
<dbReference type="HOGENOM" id="CLU_018272_3_2_9"/>
<dbReference type="UniPathway" id="UPA00060">
    <property type="reaction ID" value="UER00141"/>
</dbReference>
<dbReference type="Proteomes" id="UP000002527">
    <property type="component" value="Chromosome"/>
</dbReference>
<dbReference type="GO" id="GO:0005737">
    <property type="term" value="C:cytoplasm"/>
    <property type="evidence" value="ECO:0007669"/>
    <property type="project" value="TreeGrafter"/>
</dbReference>
<dbReference type="GO" id="GO:0000287">
    <property type="term" value="F:magnesium ion binding"/>
    <property type="evidence" value="ECO:0007669"/>
    <property type="project" value="UniProtKB-UniRule"/>
</dbReference>
<dbReference type="GO" id="GO:0004789">
    <property type="term" value="F:thiamine-phosphate diphosphorylase activity"/>
    <property type="evidence" value="ECO:0007669"/>
    <property type="project" value="UniProtKB-UniRule"/>
</dbReference>
<dbReference type="GO" id="GO:0009228">
    <property type="term" value="P:thiamine biosynthetic process"/>
    <property type="evidence" value="ECO:0007669"/>
    <property type="project" value="UniProtKB-KW"/>
</dbReference>
<dbReference type="GO" id="GO:0009229">
    <property type="term" value="P:thiamine diphosphate biosynthetic process"/>
    <property type="evidence" value="ECO:0007669"/>
    <property type="project" value="UniProtKB-UniRule"/>
</dbReference>
<dbReference type="CDD" id="cd00564">
    <property type="entry name" value="TMP_TenI"/>
    <property type="match status" value="1"/>
</dbReference>
<dbReference type="FunFam" id="3.20.20.70:FF:000096">
    <property type="entry name" value="Thiamine-phosphate synthase"/>
    <property type="match status" value="1"/>
</dbReference>
<dbReference type="Gene3D" id="3.20.20.70">
    <property type="entry name" value="Aldolase class I"/>
    <property type="match status" value="1"/>
</dbReference>
<dbReference type="HAMAP" id="MF_00097">
    <property type="entry name" value="TMP_synthase"/>
    <property type="match status" value="1"/>
</dbReference>
<dbReference type="InterPro" id="IPR013785">
    <property type="entry name" value="Aldolase_TIM"/>
</dbReference>
<dbReference type="InterPro" id="IPR036206">
    <property type="entry name" value="ThiamineP_synth_sf"/>
</dbReference>
<dbReference type="InterPro" id="IPR022998">
    <property type="entry name" value="ThiamineP_synth_TenI"/>
</dbReference>
<dbReference type="InterPro" id="IPR034291">
    <property type="entry name" value="TMP_synthase"/>
</dbReference>
<dbReference type="NCBIfam" id="TIGR00693">
    <property type="entry name" value="thiE"/>
    <property type="match status" value="1"/>
</dbReference>
<dbReference type="PANTHER" id="PTHR20857">
    <property type="entry name" value="THIAMINE-PHOSPHATE PYROPHOSPHORYLASE"/>
    <property type="match status" value="1"/>
</dbReference>
<dbReference type="PANTHER" id="PTHR20857:SF15">
    <property type="entry name" value="THIAMINE-PHOSPHATE SYNTHASE"/>
    <property type="match status" value="1"/>
</dbReference>
<dbReference type="Pfam" id="PF02581">
    <property type="entry name" value="TMP-TENI"/>
    <property type="match status" value="1"/>
</dbReference>
<dbReference type="SUPFAM" id="SSF51391">
    <property type="entry name" value="Thiamin phosphate synthase"/>
    <property type="match status" value="1"/>
</dbReference>
<comment type="function">
    <text evidence="1">Condenses 4-methyl-5-(beta-hydroxyethyl)thiazole monophosphate (THZ-P) and 2-methyl-4-amino-5-hydroxymethyl pyrimidine pyrophosphate (HMP-PP) to form thiamine monophosphate (TMP).</text>
</comment>
<comment type="catalytic activity">
    <reaction evidence="1">
        <text>2-[(2R,5Z)-2-carboxy-4-methylthiazol-5(2H)-ylidene]ethyl phosphate + 4-amino-2-methyl-5-(diphosphooxymethyl)pyrimidine + 2 H(+) = thiamine phosphate + CO2 + diphosphate</text>
        <dbReference type="Rhea" id="RHEA:47844"/>
        <dbReference type="ChEBI" id="CHEBI:15378"/>
        <dbReference type="ChEBI" id="CHEBI:16526"/>
        <dbReference type="ChEBI" id="CHEBI:33019"/>
        <dbReference type="ChEBI" id="CHEBI:37575"/>
        <dbReference type="ChEBI" id="CHEBI:57841"/>
        <dbReference type="ChEBI" id="CHEBI:62899"/>
        <dbReference type="EC" id="2.5.1.3"/>
    </reaction>
</comment>
<comment type="catalytic activity">
    <reaction evidence="1">
        <text>2-(2-carboxy-4-methylthiazol-5-yl)ethyl phosphate + 4-amino-2-methyl-5-(diphosphooxymethyl)pyrimidine + 2 H(+) = thiamine phosphate + CO2 + diphosphate</text>
        <dbReference type="Rhea" id="RHEA:47848"/>
        <dbReference type="ChEBI" id="CHEBI:15378"/>
        <dbReference type="ChEBI" id="CHEBI:16526"/>
        <dbReference type="ChEBI" id="CHEBI:33019"/>
        <dbReference type="ChEBI" id="CHEBI:37575"/>
        <dbReference type="ChEBI" id="CHEBI:57841"/>
        <dbReference type="ChEBI" id="CHEBI:62890"/>
        <dbReference type="EC" id="2.5.1.3"/>
    </reaction>
</comment>
<comment type="catalytic activity">
    <reaction evidence="1">
        <text>4-methyl-5-(2-phosphooxyethyl)-thiazole + 4-amino-2-methyl-5-(diphosphooxymethyl)pyrimidine + H(+) = thiamine phosphate + diphosphate</text>
        <dbReference type="Rhea" id="RHEA:22328"/>
        <dbReference type="ChEBI" id="CHEBI:15378"/>
        <dbReference type="ChEBI" id="CHEBI:33019"/>
        <dbReference type="ChEBI" id="CHEBI:37575"/>
        <dbReference type="ChEBI" id="CHEBI:57841"/>
        <dbReference type="ChEBI" id="CHEBI:58296"/>
        <dbReference type="EC" id="2.5.1.3"/>
    </reaction>
</comment>
<comment type="cofactor">
    <cofactor evidence="1">
        <name>Mg(2+)</name>
        <dbReference type="ChEBI" id="CHEBI:18420"/>
    </cofactor>
    <text evidence="1">Binds 1 Mg(2+) ion per subunit.</text>
</comment>
<comment type="pathway">
    <text evidence="1">Cofactor biosynthesis; thiamine diphosphate biosynthesis; thiamine phosphate from 4-amino-2-methyl-5-diphosphomethylpyrimidine and 4-methyl-5-(2-phosphoethyl)-thiazole: step 1/1.</text>
</comment>
<comment type="similarity">
    <text evidence="1">Belongs to the thiamine-phosphate synthase family.</text>
</comment>
<feature type="chain" id="PRO_0000156992" description="Thiamine-phosphate synthase">
    <location>
        <begin position="1"/>
        <end position="224"/>
    </location>
</feature>
<feature type="binding site" evidence="1">
    <location>
        <begin position="44"/>
        <end position="48"/>
    </location>
    <ligand>
        <name>4-amino-2-methyl-5-(diphosphooxymethyl)pyrimidine</name>
        <dbReference type="ChEBI" id="CHEBI:57841"/>
    </ligand>
</feature>
<feature type="binding site" evidence="1">
    <location>
        <position position="79"/>
    </location>
    <ligand>
        <name>4-amino-2-methyl-5-(diphosphooxymethyl)pyrimidine</name>
        <dbReference type="ChEBI" id="CHEBI:57841"/>
    </ligand>
</feature>
<feature type="binding site" evidence="1">
    <location>
        <position position="80"/>
    </location>
    <ligand>
        <name>Mg(2+)</name>
        <dbReference type="ChEBI" id="CHEBI:18420"/>
    </ligand>
</feature>
<feature type="binding site" evidence="1">
    <location>
        <position position="99"/>
    </location>
    <ligand>
        <name>Mg(2+)</name>
        <dbReference type="ChEBI" id="CHEBI:18420"/>
    </ligand>
</feature>
<feature type="binding site" evidence="1">
    <location>
        <position position="117"/>
    </location>
    <ligand>
        <name>4-amino-2-methyl-5-(diphosphooxymethyl)pyrimidine</name>
        <dbReference type="ChEBI" id="CHEBI:57841"/>
    </ligand>
</feature>
<feature type="binding site" evidence="1">
    <location>
        <begin position="143"/>
        <end position="145"/>
    </location>
    <ligand>
        <name>2-[(2R,5Z)-2-carboxy-4-methylthiazol-5(2H)-ylidene]ethyl phosphate</name>
        <dbReference type="ChEBI" id="CHEBI:62899"/>
    </ligand>
</feature>
<feature type="binding site" evidence="1">
    <location>
        <position position="146"/>
    </location>
    <ligand>
        <name>4-amino-2-methyl-5-(diphosphooxymethyl)pyrimidine</name>
        <dbReference type="ChEBI" id="CHEBI:57841"/>
    </ligand>
</feature>
<feature type="binding site" evidence="1">
    <location>
        <position position="175"/>
    </location>
    <ligand>
        <name>2-[(2R,5Z)-2-carboxy-4-methylthiazol-5(2H)-ylidene]ethyl phosphate</name>
        <dbReference type="ChEBI" id="CHEBI:62899"/>
    </ligand>
</feature>
<feature type="binding site" evidence="1">
    <location>
        <begin position="195"/>
        <end position="196"/>
    </location>
    <ligand>
        <name>2-[(2R,5Z)-2-carboxy-4-methylthiazol-5(2H)-ylidene]ethyl phosphate</name>
        <dbReference type="ChEBI" id="CHEBI:62899"/>
    </ligand>
</feature>
<protein>
    <recommendedName>
        <fullName evidence="1">Thiamine-phosphate synthase</fullName>
        <shortName evidence="1">TP synthase</shortName>
        <shortName evidence="1">TPS</shortName>
        <ecNumber evidence="1">2.5.1.3</ecNumber>
    </recommendedName>
    <alternativeName>
        <fullName evidence="1">Thiamine-phosphate pyrophosphorylase</fullName>
        <shortName evidence="1">TMP pyrophosphorylase</shortName>
        <shortName evidence="1">TMP-PPase</shortName>
    </alternativeName>
</protein>
<accession>P61410</accession>
<organism>
    <name type="scientific">Bacillus cereus (strain ATCC 10987 / NRS 248)</name>
    <dbReference type="NCBI Taxonomy" id="222523"/>
    <lineage>
        <taxon>Bacteria</taxon>
        <taxon>Bacillati</taxon>
        <taxon>Bacillota</taxon>
        <taxon>Bacilli</taxon>
        <taxon>Bacillales</taxon>
        <taxon>Bacillaceae</taxon>
        <taxon>Bacillus</taxon>
        <taxon>Bacillus cereus group</taxon>
    </lineage>
</organism>
<keyword id="KW-0460">Magnesium</keyword>
<keyword id="KW-0479">Metal-binding</keyword>
<keyword id="KW-0784">Thiamine biosynthesis</keyword>
<keyword id="KW-0808">Transferase</keyword>